<accession>C6DBI8</accession>
<gene>
    <name evidence="1" type="primary">hscB</name>
    <name type="ordered locus">PC1_3028</name>
</gene>
<keyword id="KW-0143">Chaperone</keyword>
<sequence length="172" mass="20040">MDYFTLFGLPIRYDVDGGLLASRFQALQRQFHPDRYAASPERERMLAVQQAATINNAYQALKHPLKRAEYMLSLHGFDVNNEQHTMKDTAFLMEQLELREELDAISQRSDADVALSAFAGRLQAMIVKRCSHMRDEFDNETWTDAADTVRKLRFLDKLQQQVEELEEQLLDR</sequence>
<protein>
    <recommendedName>
        <fullName evidence="1">Co-chaperone protein HscB</fullName>
    </recommendedName>
    <alternativeName>
        <fullName evidence="1">Hsc20</fullName>
    </alternativeName>
</protein>
<feature type="chain" id="PRO_1000212541" description="Co-chaperone protein HscB">
    <location>
        <begin position="1"/>
        <end position="172"/>
    </location>
</feature>
<feature type="domain" description="J" evidence="1">
    <location>
        <begin position="2"/>
        <end position="74"/>
    </location>
</feature>
<proteinExistence type="inferred from homology"/>
<organism>
    <name type="scientific">Pectobacterium carotovorum subsp. carotovorum (strain PC1)</name>
    <dbReference type="NCBI Taxonomy" id="561230"/>
    <lineage>
        <taxon>Bacteria</taxon>
        <taxon>Pseudomonadati</taxon>
        <taxon>Pseudomonadota</taxon>
        <taxon>Gammaproteobacteria</taxon>
        <taxon>Enterobacterales</taxon>
        <taxon>Pectobacteriaceae</taxon>
        <taxon>Pectobacterium</taxon>
    </lineage>
</organism>
<dbReference type="EMBL" id="CP001657">
    <property type="protein sequence ID" value="ACT14051.1"/>
    <property type="molecule type" value="Genomic_DNA"/>
</dbReference>
<dbReference type="RefSeq" id="WP_015841203.1">
    <property type="nucleotide sequence ID" value="NC_012917.1"/>
</dbReference>
<dbReference type="SMR" id="C6DBI8"/>
<dbReference type="STRING" id="561230.PC1_3028"/>
<dbReference type="KEGG" id="pct:PC1_3028"/>
<dbReference type="eggNOG" id="COG1076">
    <property type="taxonomic scope" value="Bacteria"/>
</dbReference>
<dbReference type="HOGENOM" id="CLU_068529_2_0_6"/>
<dbReference type="OrthoDB" id="287587at2"/>
<dbReference type="Proteomes" id="UP000002736">
    <property type="component" value="Chromosome"/>
</dbReference>
<dbReference type="GO" id="GO:1990230">
    <property type="term" value="C:iron-sulfur cluster transfer complex"/>
    <property type="evidence" value="ECO:0007669"/>
    <property type="project" value="TreeGrafter"/>
</dbReference>
<dbReference type="GO" id="GO:0001671">
    <property type="term" value="F:ATPase activator activity"/>
    <property type="evidence" value="ECO:0007669"/>
    <property type="project" value="InterPro"/>
</dbReference>
<dbReference type="GO" id="GO:0051087">
    <property type="term" value="F:protein-folding chaperone binding"/>
    <property type="evidence" value="ECO:0007669"/>
    <property type="project" value="InterPro"/>
</dbReference>
<dbReference type="GO" id="GO:0044571">
    <property type="term" value="P:[2Fe-2S] cluster assembly"/>
    <property type="evidence" value="ECO:0007669"/>
    <property type="project" value="InterPro"/>
</dbReference>
<dbReference type="GO" id="GO:0051259">
    <property type="term" value="P:protein complex oligomerization"/>
    <property type="evidence" value="ECO:0007669"/>
    <property type="project" value="InterPro"/>
</dbReference>
<dbReference type="GO" id="GO:0006457">
    <property type="term" value="P:protein folding"/>
    <property type="evidence" value="ECO:0007669"/>
    <property type="project" value="UniProtKB-UniRule"/>
</dbReference>
<dbReference type="CDD" id="cd06257">
    <property type="entry name" value="DnaJ"/>
    <property type="match status" value="1"/>
</dbReference>
<dbReference type="FunFam" id="1.10.287.110:FF:000008">
    <property type="entry name" value="Co-chaperone protein HscB"/>
    <property type="match status" value="1"/>
</dbReference>
<dbReference type="Gene3D" id="1.10.287.110">
    <property type="entry name" value="DnaJ domain"/>
    <property type="match status" value="1"/>
</dbReference>
<dbReference type="Gene3D" id="1.20.1280.20">
    <property type="entry name" value="HscB, C-terminal domain"/>
    <property type="match status" value="1"/>
</dbReference>
<dbReference type="HAMAP" id="MF_00682">
    <property type="entry name" value="HscB"/>
    <property type="match status" value="1"/>
</dbReference>
<dbReference type="InterPro" id="IPR001623">
    <property type="entry name" value="DnaJ_domain"/>
</dbReference>
<dbReference type="InterPro" id="IPR004640">
    <property type="entry name" value="HscB"/>
</dbReference>
<dbReference type="InterPro" id="IPR036386">
    <property type="entry name" value="HscB_C_sf"/>
</dbReference>
<dbReference type="InterPro" id="IPR009073">
    <property type="entry name" value="HscB_oligo_C"/>
</dbReference>
<dbReference type="InterPro" id="IPR036869">
    <property type="entry name" value="J_dom_sf"/>
</dbReference>
<dbReference type="NCBIfam" id="TIGR00714">
    <property type="entry name" value="hscB"/>
    <property type="match status" value="1"/>
</dbReference>
<dbReference type="NCBIfam" id="NF003449">
    <property type="entry name" value="PRK05014.1"/>
    <property type="match status" value="1"/>
</dbReference>
<dbReference type="PANTHER" id="PTHR14021">
    <property type="entry name" value="IRON-SULFUR CLUSTER CO-CHAPERONE PROTEIN HSCB"/>
    <property type="match status" value="1"/>
</dbReference>
<dbReference type="PANTHER" id="PTHR14021:SF15">
    <property type="entry name" value="IRON-SULFUR CLUSTER CO-CHAPERONE PROTEIN HSCB"/>
    <property type="match status" value="1"/>
</dbReference>
<dbReference type="Pfam" id="PF07743">
    <property type="entry name" value="HSCB_C"/>
    <property type="match status" value="1"/>
</dbReference>
<dbReference type="SMART" id="SM00271">
    <property type="entry name" value="DnaJ"/>
    <property type="match status" value="1"/>
</dbReference>
<dbReference type="SUPFAM" id="SSF46565">
    <property type="entry name" value="Chaperone J-domain"/>
    <property type="match status" value="1"/>
</dbReference>
<dbReference type="SUPFAM" id="SSF47144">
    <property type="entry name" value="HSC20 (HSCB), C-terminal oligomerisation domain"/>
    <property type="match status" value="1"/>
</dbReference>
<dbReference type="PROSITE" id="PS50076">
    <property type="entry name" value="DNAJ_2"/>
    <property type="match status" value="1"/>
</dbReference>
<comment type="function">
    <text evidence="1">Co-chaperone involved in the maturation of iron-sulfur cluster-containing proteins. Seems to help targeting proteins to be folded toward HscA.</text>
</comment>
<comment type="subunit">
    <text evidence="1">Interacts with HscA and stimulates its ATPase activity. Interacts with IscU.</text>
</comment>
<comment type="similarity">
    <text evidence="1">Belongs to the HscB family.</text>
</comment>
<name>HSCB_PECCP</name>
<reference key="1">
    <citation type="submission" date="2009-07" db="EMBL/GenBank/DDBJ databases">
        <title>Complete sequence of Pectobacterium carotovorum subsp. carotovorum PC1.</title>
        <authorList>
            <consortium name="US DOE Joint Genome Institute"/>
            <person name="Lucas S."/>
            <person name="Copeland A."/>
            <person name="Lapidus A."/>
            <person name="Glavina del Rio T."/>
            <person name="Tice H."/>
            <person name="Bruce D."/>
            <person name="Goodwin L."/>
            <person name="Pitluck S."/>
            <person name="Munk A.C."/>
            <person name="Brettin T."/>
            <person name="Detter J.C."/>
            <person name="Han C."/>
            <person name="Tapia R."/>
            <person name="Larimer F."/>
            <person name="Land M."/>
            <person name="Hauser L."/>
            <person name="Kyrpides N."/>
            <person name="Mikhailova N."/>
            <person name="Balakrishnan V."/>
            <person name="Glasner J."/>
            <person name="Perna N.T."/>
        </authorList>
    </citation>
    <scope>NUCLEOTIDE SEQUENCE [LARGE SCALE GENOMIC DNA]</scope>
    <source>
        <strain>PC1</strain>
    </source>
</reference>
<evidence type="ECO:0000255" key="1">
    <source>
        <dbReference type="HAMAP-Rule" id="MF_00682"/>
    </source>
</evidence>